<accession>B0RZS5</accession>
<comment type="function">
    <text evidence="1">This is one of the proteins that bind and probably mediate the attachment of the 5S RNA into the large ribosomal subunit, where it forms part of the central protuberance.</text>
</comment>
<comment type="subunit">
    <text evidence="1">Part of the 50S ribosomal subunit; part of the 5S rRNA/L5/L18/L25 subcomplex. Contacts the 5S and 23S rRNAs.</text>
</comment>
<comment type="similarity">
    <text evidence="1">Belongs to the universal ribosomal protein uL18 family.</text>
</comment>
<sequence>MFKKIDKNANRVKRHLRIRKNLTGTSEKPRLCVFKSNTNIYAQLIDDVNHNTLVAASTLDKDFSGESKSNKEAAKLVGELIGKKAIDKGIEQCVFDRSGYLYHGKVKELAEGARSAGLKF</sequence>
<keyword id="KW-1185">Reference proteome</keyword>
<keyword id="KW-0687">Ribonucleoprotein</keyword>
<keyword id="KW-0689">Ribosomal protein</keyword>
<keyword id="KW-0694">RNA-binding</keyword>
<keyword id="KW-0699">rRNA-binding</keyword>
<evidence type="ECO:0000255" key="1">
    <source>
        <dbReference type="HAMAP-Rule" id="MF_01337"/>
    </source>
</evidence>
<evidence type="ECO:0000305" key="2"/>
<organism>
    <name type="scientific">Finegoldia magna (strain ATCC 29328 / DSM 20472 / WAL 2508)</name>
    <name type="common">Peptostreptococcus magnus</name>
    <dbReference type="NCBI Taxonomy" id="334413"/>
    <lineage>
        <taxon>Bacteria</taxon>
        <taxon>Bacillati</taxon>
        <taxon>Bacillota</taxon>
        <taxon>Tissierellia</taxon>
        <taxon>Tissierellales</taxon>
        <taxon>Peptoniphilaceae</taxon>
        <taxon>Finegoldia</taxon>
    </lineage>
</organism>
<protein>
    <recommendedName>
        <fullName evidence="1">Large ribosomal subunit protein uL18</fullName>
    </recommendedName>
    <alternativeName>
        <fullName evidence="2">50S ribosomal protein L18</fullName>
    </alternativeName>
</protein>
<name>RL18_FINM2</name>
<dbReference type="EMBL" id="AP008971">
    <property type="protein sequence ID" value="BAG07589.1"/>
    <property type="molecule type" value="Genomic_DNA"/>
</dbReference>
<dbReference type="RefSeq" id="WP_002837380.1">
    <property type="nucleotide sequence ID" value="NC_010376.1"/>
</dbReference>
<dbReference type="SMR" id="B0RZS5"/>
<dbReference type="STRING" id="334413.FMG_0171"/>
<dbReference type="KEGG" id="fma:FMG_0171"/>
<dbReference type="eggNOG" id="COG0256">
    <property type="taxonomic scope" value="Bacteria"/>
</dbReference>
<dbReference type="HOGENOM" id="CLU_098841_0_1_9"/>
<dbReference type="Proteomes" id="UP000001319">
    <property type="component" value="Chromosome"/>
</dbReference>
<dbReference type="GO" id="GO:0022625">
    <property type="term" value="C:cytosolic large ribosomal subunit"/>
    <property type="evidence" value="ECO:0007669"/>
    <property type="project" value="TreeGrafter"/>
</dbReference>
<dbReference type="GO" id="GO:0008097">
    <property type="term" value="F:5S rRNA binding"/>
    <property type="evidence" value="ECO:0007669"/>
    <property type="project" value="TreeGrafter"/>
</dbReference>
<dbReference type="GO" id="GO:0003735">
    <property type="term" value="F:structural constituent of ribosome"/>
    <property type="evidence" value="ECO:0007669"/>
    <property type="project" value="InterPro"/>
</dbReference>
<dbReference type="GO" id="GO:0006412">
    <property type="term" value="P:translation"/>
    <property type="evidence" value="ECO:0007669"/>
    <property type="project" value="UniProtKB-UniRule"/>
</dbReference>
<dbReference type="CDD" id="cd00432">
    <property type="entry name" value="Ribosomal_L18_L5e"/>
    <property type="match status" value="1"/>
</dbReference>
<dbReference type="FunFam" id="3.30.420.100:FF:000001">
    <property type="entry name" value="50S ribosomal protein L18"/>
    <property type="match status" value="1"/>
</dbReference>
<dbReference type="Gene3D" id="3.30.420.100">
    <property type="match status" value="1"/>
</dbReference>
<dbReference type="HAMAP" id="MF_01337_B">
    <property type="entry name" value="Ribosomal_uL18_B"/>
    <property type="match status" value="1"/>
</dbReference>
<dbReference type="InterPro" id="IPR004389">
    <property type="entry name" value="Ribosomal_uL18_bac-type"/>
</dbReference>
<dbReference type="InterPro" id="IPR005484">
    <property type="entry name" value="Ribosomal_uL18_bac/euk"/>
</dbReference>
<dbReference type="NCBIfam" id="TIGR00060">
    <property type="entry name" value="L18_bact"/>
    <property type="match status" value="1"/>
</dbReference>
<dbReference type="PANTHER" id="PTHR12899">
    <property type="entry name" value="39S RIBOSOMAL PROTEIN L18, MITOCHONDRIAL"/>
    <property type="match status" value="1"/>
</dbReference>
<dbReference type="PANTHER" id="PTHR12899:SF3">
    <property type="entry name" value="LARGE RIBOSOMAL SUBUNIT PROTEIN UL18M"/>
    <property type="match status" value="1"/>
</dbReference>
<dbReference type="Pfam" id="PF00861">
    <property type="entry name" value="Ribosomal_L18p"/>
    <property type="match status" value="1"/>
</dbReference>
<dbReference type="SUPFAM" id="SSF53137">
    <property type="entry name" value="Translational machinery components"/>
    <property type="match status" value="1"/>
</dbReference>
<feature type="chain" id="PRO_1000142667" description="Large ribosomal subunit protein uL18">
    <location>
        <begin position="1"/>
        <end position="120"/>
    </location>
</feature>
<reference key="1">
    <citation type="journal article" date="2008" name="DNA Res.">
        <title>Complete genome sequence of Finegoldia magna, an anaerobic opportunistic pathogen.</title>
        <authorList>
            <person name="Goto T."/>
            <person name="Yamashita A."/>
            <person name="Hirakawa H."/>
            <person name="Matsutani M."/>
            <person name="Todo K."/>
            <person name="Ohshima K."/>
            <person name="Toh H."/>
            <person name="Miyamoto K."/>
            <person name="Kuhara S."/>
            <person name="Hattori M."/>
            <person name="Shimizu T."/>
            <person name="Akimoto S."/>
        </authorList>
    </citation>
    <scope>NUCLEOTIDE SEQUENCE [LARGE SCALE GENOMIC DNA]</scope>
    <source>
        <strain>ATCC 29328 / DSM 20472 / WAL 2508</strain>
    </source>
</reference>
<proteinExistence type="inferred from homology"/>
<gene>
    <name evidence="1" type="primary">rplR</name>
    <name type="ordered locus">FMG_0171</name>
</gene>